<name>URE2_BURM7</name>
<proteinExistence type="inferred from homology"/>
<accession>A3MMV1</accession>
<evidence type="ECO:0000255" key="1">
    <source>
        <dbReference type="HAMAP-Rule" id="MF_01954"/>
    </source>
</evidence>
<reference key="1">
    <citation type="journal article" date="2010" name="Genome Biol. Evol.">
        <title>Continuing evolution of Burkholderia mallei through genome reduction and large-scale rearrangements.</title>
        <authorList>
            <person name="Losada L."/>
            <person name="Ronning C.M."/>
            <person name="DeShazer D."/>
            <person name="Woods D."/>
            <person name="Fedorova N."/>
            <person name="Kim H.S."/>
            <person name="Shabalina S.A."/>
            <person name="Pearson T.R."/>
            <person name="Brinkac L."/>
            <person name="Tan P."/>
            <person name="Nandi T."/>
            <person name="Crabtree J."/>
            <person name="Badger J."/>
            <person name="Beckstrom-Sternberg S."/>
            <person name="Saqib M."/>
            <person name="Schutzer S.E."/>
            <person name="Keim P."/>
            <person name="Nierman W.C."/>
        </authorList>
    </citation>
    <scope>NUCLEOTIDE SEQUENCE [LARGE SCALE GENOMIC DNA]</scope>
    <source>
        <strain>NCTC 10247</strain>
    </source>
</reference>
<gene>
    <name evidence="1" type="primary">ureB</name>
    <name type="ordered locus">BMA10247_2056</name>
</gene>
<organism>
    <name type="scientific">Burkholderia mallei (strain NCTC 10247)</name>
    <dbReference type="NCBI Taxonomy" id="320389"/>
    <lineage>
        <taxon>Bacteria</taxon>
        <taxon>Pseudomonadati</taxon>
        <taxon>Pseudomonadota</taxon>
        <taxon>Betaproteobacteria</taxon>
        <taxon>Burkholderiales</taxon>
        <taxon>Burkholderiaceae</taxon>
        <taxon>Burkholderia</taxon>
        <taxon>pseudomallei group</taxon>
    </lineage>
</organism>
<sequence length="101" mass="10809">MIPGELVIDDGEHTLNAGRHTIALVVANTGDRPVQVGSHYHFHEVNDALSFDRAAARGFRLNIAAGTAVRFEPGQTRTVELVELGGARAVYGFQGKVMGPL</sequence>
<dbReference type="EC" id="3.5.1.5" evidence="1"/>
<dbReference type="EMBL" id="CP000548">
    <property type="protein sequence ID" value="ABO04931.1"/>
    <property type="molecule type" value="Genomic_DNA"/>
</dbReference>
<dbReference type="RefSeq" id="WP_004186466.1">
    <property type="nucleotide sequence ID" value="NZ_CP007802.1"/>
</dbReference>
<dbReference type="SMR" id="A3MMV1"/>
<dbReference type="KEGG" id="bmaz:BM44_1171"/>
<dbReference type="KEGG" id="bmn:BMA10247_2056"/>
<dbReference type="PATRIC" id="fig|320389.8.peg.1307"/>
<dbReference type="UniPathway" id="UPA00258">
    <property type="reaction ID" value="UER00370"/>
</dbReference>
<dbReference type="GO" id="GO:0035550">
    <property type="term" value="C:urease complex"/>
    <property type="evidence" value="ECO:0007669"/>
    <property type="project" value="InterPro"/>
</dbReference>
<dbReference type="GO" id="GO:0009039">
    <property type="term" value="F:urease activity"/>
    <property type="evidence" value="ECO:0007669"/>
    <property type="project" value="UniProtKB-UniRule"/>
</dbReference>
<dbReference type="GO" id="GO:0043419">
    <property type="term" value="P:urea catabolic process"/>
    <property type="evidence" value="ECO:0007669"/>
    <property type="project" value="UniProtKB-UniRule"/>
</dbReference>
<dbReference type="CDD" id="cd00407">
    <property type="entry name" value="Urease_beta"/>
    <property type="match status" value="1"/>
</dbReference>
<dbReference type="FunFam" id="2.10.150.10:FF:000001">
    <property type="entry name" value="Urease subunit beta"/>
    <property type="match status" value="1"/>
</dbReference>
<dbReference type="Gene3D" id="2.10.150.10">
    <property type="entry name" value="Urease, beta subunit"/>
    <property type="match status" value="1"/>
</dbReference>
<dbReference type="HAMAP" id="MF_01954">
    <property type="entry name" value="Urease_beta"/>
    <property type="match status" value="1"/>
</dbReference>
<dbReference type="InterPro" id="IPR002019">
    <property type="entry name" value="Urease_beta-like"/>
</dbReference>
<dbReference type="InterPro" id="IPR036461">
    <property type="entry name" value="Urease_betasu_sf"/>
</dbReference>
<dbReference type="InterPro" id="IPR050069">
    <property type="entry name" value="Urease_subunit"/>
</dbReference>
<dbReference type="NCBIfam" id="NF009682">
    <property type="entry name" value="PRK13203.1"/>
    <property type="match status" value="1"/>
</dbReference>
<dbReference type="NCBIfam" id="TIGR00192">
    <property type="entry name" value="urease_beta"/>
    <property type="match status" value="1"/>
</dbReference>
<dbReference type="PANTHER" id="PTHR33569">
    <property type="entry name" value="UREASE"/>
    <property type="match status" value="1"/>
</dbReference>
<dbReference type="PANTHER" id="PTHR33569:SF1">
    <property type="entry name" value="UREASE"/>
    <property type="match status" value="1"/>
</dbReference>
<dbReference type="Pfam" id="PF00699">
    <property type="entry name" value="Urease_beta"/>
    <property type="match status" value="1"/>
</dbReference>
<dbReference type="SUPFAM" id="SSF51278">
    <property type="entry name" value="Urease, beta-subunit"/>
    <property type="match status" value="1"/>
</dbReference>
<protein>
    <recommendedName>
        <fullName evidence="1">Urease subunit beta</fullName>
        <ecNumber evidence="1">3.5.1.5</ecNumber>
    </recommendedName>
    <alternativeName>
        <fullName evidence="1">Urea amidohydrolase subunit beta</fullName>
    </alternativeName>
</protein>
<keyword id="KW-0963">Cytoplasm</keyword>
<keyword id="KW-0378">Hydrolase</keyword>
<comment type="catalytic activity">
    <reaction evidence="1">
        <text>urea + 2 H2O + H(+) = hydrogencarbonate + 2 NH4(+)</text>
        <dbReference type="Rhea" id="RHEA:20557"/>
        <dbReference type="ChEBI" id="CHEBI:15377"/>
        <dbReference type="ChEBI" id="CHEBI:15378"/>
        <dbReference type="ChEBI" id="CHEBI:16199"/>
        <dbReference type="ChEBI" id="CHEBI:17544"/>
        <dbReference type="ChEBI" id="CHEBI:28938"/>
        <dbReference type="EC" id="3.5.1.5"/>
    </reaction>
</comment>
<comment type="pathway">
    <text evidence="1">Nitrogen metabolism; urea degradation; CO(2) and NH(3) from urea (urease route): step 1/1.</text>
</comment>
<comment type="subunit">
    <text evidence="1">Heterotrimer of UreA (gamma), UreB (beta) and UreC (alpha) subunits. Three heterotrimers associate to form the active enzyme.</text>
</comment>
<comment type="subcellular location">
    <subcellularLocation>
        <location evidence="1">Cytoplasm</location>
    </subcellularLocation>
</comment>
<comment type="similarity">
    <text evidence="1">Belongs to the urease beta subunit family.</text>
</comment>
<feature type="chain" id="PRO_1000070722" description="Urease subunit beta">
    <location>
        <begin position="1"/>
        <end position="101"/>
    </location>
</feature>